<organism>
    <name type="scientific">Streptococcus pyogenes serotype M5 (strain Manfredo)</name>
    <dbReference type="NCBI Taxonomy" id="160491"/>
    <lineage>
        <taxon>Bacteria</taxon>
        <taxon>Bacillati</taxon>
        <taxon>Bacillota</taxon>
        <taxon>Bacilli</taxon>
        <taxon>Lactobacillales</taxon>
        <taxon>Streptococcaceae</taxon>
        <taxon>Streptococcus</taxon>
    </lineage>
</organism>
<sequence length="418" mass="47269">MNIFEELKARGLVFQTTDEQALVKALTEGQVSYYTGYDPTADSLHLGHLVAILTSRRLQLAGHKPYALVGGATGLIGDPSFKDAERSLQTKETVLEWSDKIKGQLSTFLDFENGDNKAELVNNYDWFSQISFIDFLRDVGKYFTVNYMMSKDSVKKRIETGISYTEFAYQIMQGYDFYELNDKHNVTLQIGGSDQWGNMTAGTELLRKKADKTGHVMTVPLITDSTGKKFGKSEGNAVWLDADKTSPYEMYQFWLNVMDDDAVRFLKIFTFLSLDEIAEIETQFNAARHERLAQKILAREVVTLVHGEEAYKQALNITEQLFAGNIKNLSANELKQGLSNVPNYHVQSEDSLNLVDMLVTAGISPSKRQAREDVQNGAIYINGDRVQDLDYQLSNDDKTDDQLTVIRRGKKKYAVLTY</sequence>
<feature type="chain" id="PRO_1000088638" description="Tyrosine--tRNA ligase">
    <location>
        <begin position="1"/>
        <end position="418"/>
    </location>
</feature>
<feature type="domain" description="S4 RNA-binding" evidence="1">
    <location>
        <begin position="352"/>
        <end position="418"/>
    </location>
</feature>
<feature type="short sequence motif" description="'HIGH' region">
    <location>
        <begin position="39"/>
        <end position="48"/>
    </location>
</feature>
<feature type="short sequence motif" description="'KMSKS' region">
    <location>
        <begin position="229"/>
        <end position="233"/>
    </location>
</feature>
<feature type="binding site" evidence="1">
    <location>
        <position position="34"/>
    </location>
    <ligand>
        <name>L-tyrosine</name>
        <dbReference type="ChEBI" id="CHEBI:58315"/>
    </ligand>
</feature>
<feature type="binding site" evidence="1">
    <location>
        <position position="169"/>
    </location>
    <ligand>
        <name>L-tyrosine</name>
        <dbReference type="ChEBI" id="CHEBI:58315"/>
    </ligand>
</feature>
<feature type="binding site" evidence="1">
    <location>
        <position position="173"/>
    </location>
    <ligand>
        <name>L-tyrosine</name>
        <dbReference type="ChEBI" id="CHEBI:58315"/>
    </ligand>
</feature>
<feature type="binding site" evidence="1">
    <location>
        <position position="232"/>
    </location>
    <ligand>
        <name>ATP</name>
        <dbReference type="ChEBI" id="CHEBI:30616"/>
    </ligand>
</feature>
<dbReference type="EC" id="6.1.1.1" evidence="1"/>
<dbReference type="EMBL" id="AM295007">
    <property type="protein sequence ID" value="CAM29421.1"/>
    <property type="molecule type" value="Genomic_DNA"/>
</dbReference>
<dbReference type="RefSeq" id="WP_011888532.1">
    <property type="nucleotide sequence ID" value="NC_009332.1"/>
</dbReference>
<dbReference type="SMR" id="A2RC49"/>
<dbReference type="KEGG" id="spf:SpyM50079"/>
<dbReference type="HOGENOM" id="CLU_024003_0_3_9"/>
<dbReference type="GO" id="GO:0005829">
    <property type="term" value="C:cytosol"/>
    <property type="evidence" value="ECO:0007669"/>
    <property type="project" value="TreeGrafter"/>
</dbReference>
<dbReference type="GO" id="GO:0005524">
    <property type="term" value="F:ATP binding"/>
    <property type="evidence" value="ECO:0007669"/>
    <property type="project" value="UniProtKB-UniRule"/>
</dbReference>
<dbReference type="GO" id="GO:0003723">
    <property type="term" value="F:RNA binding"/>
    <property type="evidence" value="ECO:0007669"/>
    <property type="project" value="UniProtKB-KW"/>
</dbReference>
<dbReference type="GO" id="GO:0004831">
    <property type="term" value="F:tyrosine-tRNA ligase activity"/>
    <property type="evidence" value="ECO:0007669"/>
    <property type="project" value="UniProtKB-UniRule"/>
</dbReference>
<dbReference type="GO" id="GO:0006437">
    <property type="term" value="P:tyrosyl-tRNA aminoacylation"/>
    <property type="evidence" value="ECO:0007669"/>
    <property type="project" value="UniProtKB-UniRule"/>
</dbReference>
<dbReference type="CDD" id="cd00165">
    <property type="entry name" value="S4"/>
    <property type="match status" value="1"/>
</dbReference>
<dbReference type="CDD" id="cd00805">
    <property type="entry name" value="TyrRS_core"/>
    <property type="match status" value="1"/>
</dbReference>
<dbReference type="FunFam" id="1.10.240.10:FF:000001">
    <property type="entry name" value="Tyrosine--tRNA ligase"/>
    <property type="match status" value="1"/>
</dbReference>
<dbReference type="FunFam" id="3.40.50.620:FF:000008">
    <property type="entry name" value="Tyrosine--tRNA ligase"/>
    <property type="match status" value="1"/>
</dbReference>
<dbReference type="Gene3D" id="3.40.50.620">
    <property type="entry name" value="HUPs"/>
    <property type="match status" value="1"/>
</dbReference>
<dbReference type="Gene3D" id="3.10.290.10">
    <property type="entry name" value="RNA-binding S4 domain"/>
    <property type="match status" value="1"/>
</dbReference>
<dbReference type="Gene3D" id="1.10.240.10">
    <property type="entry name" value="Tyrosyl-Transfer RNA Synthetase"/>
    <property type="match status" value="1"/>
</dbReference>
<dbReference type="HAMAP" id="MF_02006">
    <property type="entry name" value="Tyr_tRNA_synth_type1"/>
    <property type="match status" value="1"/>
</dbReference>
<dbReference type="InterPro" id="IPR001412">
    <property type="entry name" value="aa-tRNA-synth_I_CS"/>
</dbReference>
<dbReference type="InterPro" id="IPR002305">
    <property type="entry name" value="aa-tRNA-synth_Ic"/>
</dbReference>
<dbReference type="InterPro" id="IPR014729">
    <property type="entry name" value="Rossmann-like_a/b/a_fold"/>
</dbReference>
<dbReference type="InterPro" id="IPR002942">
    <property type="entry name" value="S4_RNA-bd"/>
</dbReference>
<dbReference type="InterPro" id="IPR036986">
    <property type="entry name" value="S4_RNA-bd_sf"/>
</dbReference>
<dbReference type="InterPro" id="IPR054608">
    <property type="entry name" value="SYY-like_C"/>
</dbReference>
<dbReference type="InterPro" id="IPR002307">
    <property type="entry name" value="Tyr-tRNA-ligase"/>
</dbReference>
<dbReference type="InterPro" id="IPR024088">
    <property type="entry name" value="Tyr-tRNA-ligase_bac-type"/>
</dbReference>
<dbReference type="InterPro" id="IPR024107">
    <property type="entry name" value="Tyr-tRNA-ligase_bac_1"/>
</dbReference>
<dbReference type="NCBIfam" id="TIGR00234">
    <property type="entry name" value="tyrS"/>
    <property type="match status" value="1"/>
</dbReference>
<dbReference type="PANTHER" id="PTHR11766:SF0">
    <property type="entry name" value="TYROSINE--TRNA LIGASE, MITOCHONDRIAL"/>
    <property type="match status" value="1"/>
</dbReference>
<dbReference type="PANTHER" id="PTHR11766">
    <property type="entry name" value="TYROSYL-TRNA SYNTHETASE"/>
    <property type="match status" value="1"/>
</dbReference>
<dbReference type="Pfam" id="PF22421">
    <property type="entry name" value="SYY_C-terminal"/>
    <property type="match status" value="1"/>
</dbReference>
<dbReference type="Pfam" id="PF00579">
    <property type="entry name" value="tRNA-synt_1b"/>
    <property type="match status" value="1"/>
</dbReference>
<dbReference type="PRINTS" id="PR01040">
    <property type="entry name" value="TRNASYNTHTYR"/>
</dbReference>
<dbReference type="SMART" id="SM00363">
    <property type="entry name" value="S4"/>
    <property type="match status" value="1"/>
</dbReference>
<dbReference type="SUPFAM" id="SSF55174">
    <property type="entry name" value="Alpha-L RNA-binding motif"/>
    <property type="match status" value="1"/>
</dbReference>
<dbReference type="SUPFAM" id="SSF52374">
    <property type="entry name" value="Nucleotidylyl transferase"/>
    <property type="match status" value="1"/>
</dbReference>
<dbReference type="PROSITE" id="PS00178">
    <property type="entry name" value="AA_TRNA_LIGASE_I"/>
    <property type="match status" value="1"/>
</dbReference>
<dbReference type="PROSITE" id="PS50889">
    <property type="entry name" value="S4"/>
    <property type="match status" value="1"/>
</dbReference>
<accession>A2RC49</accession>
<comment type="function">
    <text evidence="1">Catalyzes the attachment of tyrosine to tRNA(Tyr) in a two-step reaction: tyrosine is first activated by ATP to form Tyr-AMP and then transferred to the acceptor end of tRNA(Tyr).</text>
</comment>
<comment type="catalytic activity">
    <reaction evidence="1">
        <text>tRNA(Tyr) + L-tyrosine + ATP = L-tyrosyl-tRNA(Tyr) + AMP + diphosphate + H(+)</text>
        <dbReference type="Rhea" id="RHEA:10220"/>
        <dbReference type="Rhea" id="RHEA-COMP:9706"/>
        <dbReference type="Rhea" id="RHEA-COMP:9707"/>
        <dbReference type="ChEBI" id="CHEBI:15378"/>
        <dbReference type="ChEBI" id="CHEBI:30616"/>
        <dbReference type="ChEBI" id="CHEBI:33019"/>
        <dbReference type="ChEBI" id="CHEBI:58315"/>
        <dbReference type="ChEBI" id="CHEBI:78442"/>
        <dbReference type="ChEBI" id="CHEBI:78536"/>
        <dbReference type="ChEBI" id="CHEBI:456215"/>
        <dbReference type="EC" id="6.1.1.1"/>
    </reaction>
</comment>
<comment type="subunit">
    <text evidence="1">Homodimer.</text>
</comment>
<comment type="subcellular location">
    <subcellularLocation>
        <location evidence="1">Cytoplasm</location>
    </subcellularLocation>
</comment>
<comment type="similarity">
    <text evidence="1">Belongs to the class-I aminoacyl-tRNA synthetase family. TyrS type 1 subfamily.</text>
</comment>
<reference key="1">
    <citation type="journal article" date="2007" name="J. Bacteriol.">
        <title>Complete genome of acute rheumatic fever-associated serotype M5 Streptococcus pyogenes strain Manfredo.</title>
        <authorList>
            <person name="Holden M.T.G."/>
            <person name="Scott A."/>
            <person name="Cherevach I."/>
            <person name="Chillingworth T."/>
            <person name="Churcher C."/>
            <person name="Cronin A."/>
            <person name="Dowd L."/>
            <person name="Feltwell T."/>
            <person name="Hamlin N."/>
            <person name="Holroyd S."/>
            <person name="Jagels K."/>
            <person name="Moule S."/>
            <person name="Mungall K."/>
            <person name="Quail M.A."/>
            <person name="Price C."/>
            <person name="Rabbinowitsch E."/>
            <person name="Sharp S."/>
            <person name="Skelton J."/>
            <person name="Whitehead S."/>
            <person name="Barrell B.G."/>
            <person name="Kehoe M."/>
            <person name="Parkhill J."/>
        </authorList>
    </citation>
    <scope>NUCLEOTIDE SEQUENCE [LARGE SCALE GENOMIC DNA]</scope>
    <source>
        <strain>Manfredo</strain>
    </source>
</reference>
<evidence type="ECO:0000255" key="1">
    <source>
        <dbReference type="HAMAP-Rule" id="MF_02006"/>
    </source>
</evidence>
<keyword id="KW-0030">Aminoacyl-tRNA synthetase</keyword>
<keyword id="KW-0067">ATP-binding</keyword>
<keyword id="KW-0963">Cytoplasm</keyword>
<keyword id="KW-0436">Ligase</keyword>
<keyword id="KW-0547">Nucleotide-binding</keyword>
<keyword id="KW-0648">Protein biosynthesis</keyword>
<keyword id="KW-0694">RNA-binding</keyword>
<protein>
    <recommendedName>
        <fullName evidence="1">Tyrosine--tRNA ligase</fullName>
        <ecNumber evidence="1">6.1.1.1</ecNumber>
    </recommendedName>
    <alternativeName>
        <fullName evidence="1">Tyrosyl-tRNA synthetase</fullName>
        <shortName evidence="1">TyrRS</shortName>
    </alternativeName>
</protein>
<name>SYY_STRPG</name>
<proteinExistence type="inferred from homology"/>
<gene>
    <name evidence="1" type="primary">tyrS</name>
    <name type="ordered locus">SpyM50079</name>
</gene>